<dbReference type="EMBL" id="AK039560">
    <property type="protein sequence ID" value="BAC30384.1"/>
    <property type="molecule type" value="mRNA"/>
</dbReference>
<dbReference type="EMBL" id="AK089970">
    <property type="protein sequence ID" value="BAC41021.1"/>
    <property type="molecule type" value="mRNA"/>
</dbReference>
<dbReference type="EMBL" id="AK134734">
    <property type="protein sequence ID" value="BAE22262.1"/>
    <property type="molecule type" value="mRNA"/>
</dbReference>
<dbReference type="EMBL" id="BC055797">
    <property type="protein sequence ID" value="AAH55797.1"/>
    <property type="molecule type" value="mRNA"/>
</dbReference>
<dbReference type="EMBL" id="BC089507">
    <property type="protein sequence ID" value="AAH89507.1"/>
    <property type="status" value="ALT_TERM"/>
    <property type="molecule type" value="mRNA"/>
</dbReference>
<dbReference type="EMBL" id="BC092531">
    <property type="protein sequence ID" value="AAH92531.1"/>
    <property type="status" value="ALT_TERM"/>
    <property type="molecule type" value="mRNA"/>
</dbReference>
<dbReference type="CCDS" id="CCDS40658.1"/>
<dbReference type="RefSeq" id="NP_780534.1">
    <property type="nucleotide sequence ID" value="NM_175325.4"/>
</dbReference>
<dbReference type="SMR" id="Q8C1Z7"/>
<dbReference type="BioGRID" id="221946">
    <property type="interactions" value="4"/>
</dbReference>
<dbReference type="ComplexPortal" id="CPX-1909">
    <property type="entry name" value="BBSome complex"/>
</dbReference>
<dbReference type="DIP" id="DIP-60352N"/>
<dbReference type="FunCoup" id="Q8C1Z7">
    <property type="interactions" value="1087"/>
</dbReference>
<dbReference type="IntAct" id="Q8C1Z7">
    <property type="interactions" value="5"/>
</dbReference>
<dbReference type="STRING" id="10090.ENSMUSP00000026265"/>
<dbReference type="iPTMnet" id="Q8C1Z7"/>
<dbReference type="PhosphoSitePlus" id="Q8C1Z7"/>
<dbReference type="PaxDb" id="10090-ENSMUSP00000026265"/>
<dbReference type="ProteomicsDB" id="273547"/>
<dbReference type="Pumba" id="Q8C1Z7"/>
<dbReference type="Antibodypedia" id="26730">
    <property type="antibodies" value="284 antibodies from 31 providers"/>
</dbReference>
<dbReference type="Ensembl" id="ENSMUST00000026265.8">
    <property type="protein sequence ID" value="ENSMUSP00000026265.7"/>
    <property type="gene ID" value="ENSMUSG00000025235.9"/>
</dbReference>
<dbReference type="GeneID" id="102774"/>
<dbReference type="KEGG" id="mmu:102774"/>
<dbReference type="UCSC" id="uc009pxr.2">
    <property type="organism name" value="mouse"/>
</dbReference>
<dbReference type="AGR" id="MGI:2143311"/>
<dbReference type="CTD" id="585"/>
<dbReference type="MGI" id="MGI:2143311">
    <property type="gene designation" value="Bbs4"/>
</dbReference>
<dbReference type="VEuPathDB" id="HostDB:ENSMUSG00000025235"/>
<dbReference type="eggNOG" id="KOG1124">
    <property type="taxonomic scope" value="Eukaryota"/>
</dbReference>
<dbReference type="GeneTree" id="ENSGT00940000158166"/>
<dbReference type="HOGENOM" id="CLU_033477_1_0_1"/>
<dbReference type="InParanoid" id="Q8C1Z7"/>
<dbReference type="OMA" id="YCEVAWH"/>
<dbReference type="OrthoDB" id="309339at2759"/>
<dbReference type="PhylomeDB" id="Q8C1Z7"/>
<dbReference type="TreeFam" id="TF324966"/>
<dbReference type="Reactome" id="R-MMU-5620922">
    <property type="pathway name" value="BBSome-mediated cargo-targeting to cilium"/>
</dbReference>
<dbReference type="BioGRID-ORCS" id="102774">
    <property type="hits" value="3 hits in 76 CRISPR screens"/>
</dbReference>
<dbReference type="CD-CODE" id="01CA17F3">
    <property type="entry name" value="Centrosome"/>
</dbReference>
<dbReference type="ChiTaRS" id="Bbs4">
    <property type="organism name" value="mouse"/>
</dbReference>
<dbReference type="PRO" id="PR:Q8C1Z7"/>
<dbReference type="Proteomes" id="UP000000589">
    <property type="component" value="Chromosome 9"/>
</dbReference>
<dbReference type="RNAct" id="Q8C1Z7">
    <property type="molecule type" value="protein"/>
</dbReference>
<dbReference type="Bgee" id="ENSMUSG00000025235">
    <property type="expression patterns" value="Expressed in primary oocyte and 231 other cell types or tissues"/>
</dbReference>
<dbReference type="ExpressionAtlas" id="Q8C1Z7">
    <property type="expression patterns" value="baseline and differential"/>
</dbReference>
<dbReference type="GO" id="GO:0034464">
    <property type="term" value="C:BBSome"/>
    <property type="evidence" value="ECO:0000314"/>
    <property type="project" value="MGI"/>
</dbReference>
<dbReference type="GO" id="GO:0034451">
    <property type="term" value="C:centriolar satellite"/>
    <property type="evidence" value="ECO:0000314"/>
    <property type="project" value="MGI"/>
</dbReference>
<dbReference type="GO" id="GO:0005814">
    <property type="term" value="C:centriole"/>
    <property type="evidence" value="ECO:0007669"/>
    <property type="project" value="Ensembl"/>
</dbReference>
<dbReference type="GO" id="GO:0005813">
    <property type="term" value="C:centrosome"/>
    <property type="evidence" value="ECO:0000314"/>
    <property type="project" value="MGI"/>
</dbReference>
<dbReference type="GO" id="GO:0036064">
    <property type="term" value="C:ciliary basal body"/>
    <property type="evidence" value="ECO:0000266"/>
    <property type="project" value="MGI"/>
</dbReference>
<dbReference type="GO" id="GO:0060170">
    <property type="term" value="C:ciliary membrane"/>
    <property type="evidence" value="ECO:0000266"/>
    <property type="project" value="ComplexPortal"/>
</dbReference>
<dbReference type="GO" id="GO:0005929">
    <property type="term" value="C:cilium"/>
    <property type="evidence" value="ECO:0000250"/>
    <property type="project" value="UniProtKB"/>
</dbReference>
<dbReference type="GO" id="GO:0005737">
    <property type="term" value="C:cytoplasm"/>
    <property type="evidence" value="ECO:0007669"/>
    <property type="project" value="UniProtKB-SubCell"/>
</dbReference>
<dbReference type="GO" id="GO:0016020">
    <property type="term" value="C:membrane"/>
    <property type="evidence" value="ECO:0000314"/>
    <property type="project" value="MGI"/>
</dbReference>
<dbReference type="GO" id="GO:0031514">
    <property type="term" value="C:motile cilium"/>
    <property type="evidence" value="ECO:0000315"/>
    <property type="project" value="BHF-UCL"/>
</dbReference>
<dbReference type="GO" id="GO:0005634">
    <property type="term" value="C:nucleus"/>
    <property type="evidence" value="ECO:0007669"/>
    <property type="project" value="GOC"/>
</dbReference>
<dbReference type="GO" id="GO:0000242">
    <property type="term" value="C:pericentriolar material"/>
    <property type="evidence" value="ECO:0000250"/>
    <property type="project" value="UniProtKB"/>
</dbReference>
<dbReference type="GO" id="GO:0032391">
    <property type="term" value="C:photoreceptor connecting cilium"/>
    <property type="evidence" value="ECO:0000314"/>
    <property type="project" value="MGI"/>
</dbReference>
<dbReference type="GO" id="GO:0001917">
    <property type="term" value="C:photoreceptor inner segment"/>
    <property type="evidence" value="ECO:0000314"/>
    <property type="project" value="MGI"/>
</dbReference>
<dbReference type="GO" id="GO:0001750">
    <property type="term" value="C:photoreceptor outer segment"/>
    <property type="evidence" value="ECO:0000314"/>
    <property type="project" value="MGI"/>
</dbReference>
<dbReference type="GO" id="GO:0043014">
    <property type="term" value="F:alpha-tubulin binding"/>
    <property type="evidence" value="ECO:0007669"/>
    <property type="project" value="Ensembl"/>
</dbReference>
<dbReference type="GO" id="GO:0048487">
    <property type="term" value="F:beta-tubulin binding"/>
    <property type="evidence" value="ECO:0007669"/>
    <property type="project" value="Ensembl"/>
</dbReference>
<dbReference type="GO" id="GO:0034452">
    <property type="term" value="F:dynactin binding"/>
    <property type="evidence" value="ECO:0007669"/>
    <property type="project" value="Ensembl"/>
</dbReference>
<dbReference type="GO" id="GO:0030674">
    <property type="term" value="F:protein-macromolecule adaptor activity"/>
    <property type="evidence" value="ECO:0000250"/>
    <property type="project" value="UniProtKB"/>
</dbReference>
<dbReference type="GO" id="GO:0061629">
    <property type="term" value="F:RNA polymerase II-specific DNA-binding transcription factor binding"/>
    <property type="evidence" value="ECO:0000266"/>
    <property type="project" value="MGI"/>
</dbReference>
<dbReference type="GO" id="GO:0060612">
    <property type="term" value="P:adipose tissue development"/>
    <property type="evidence" value="ECO:0000315"/>
    <property type="project" value="MGI"/>
</dbReference>
<dbReference type="GO" id="GO:0030534">
    <property type="term" value="P:adult behavior"/>
    <property type="evidence" value="ECO:0000315"/>
    <property type="project" value="MGI"/>
</dbReference>
<dbReference type="GO" id="GO:0001782">
    <property type="term" value="P:B cell homeostasis"/>
    <property type="evidence" value="ECO:0000315"/>
    <property type="project" value="MGI"/>
</dbReference>
<dbReference type="GO" id="GO:0048854">
    <property type="term" value="P:brain morphogenesis"/>
    <property type="evidence" value="ECO:0000315"/>
    <property type="project" value="MGI"/>
</dbReference>
<dbReference type="GO" id="GO:0007098">
    <property type="term" value="P:centrosome cycle"/>
    <property type="evidence" value="ECO:0000250"/>
    <property type="project" value="UniProtKB"/>
</dbReference>
<dbReference type="GO" id="GO:0021987">
    <property type="term" value="P:cerebral cortex development"/>
    <property type="evidence" value="ECO:0000315"/>
    <property type="project" value="MGI"/>
</dbReference>
<dbReference type="GO" id="GO:0060271">
    <property type="term" value="P:cilium assembly"/>
    <property type="evidence" value="ECO:0000315"/>
    <property type="project" value="BHF-UCL"/>
</dbReference>
<dbReference type="GO" id="GO:0016358">
    <property type="term" value="P:dendrite development"/>
    <property type="evidence" value="ECO:0000315"/>
    <property type="project" value="MGI"/>
</dbReference>
<dbReference type="GO" id="GO:0034101">
    <property type="term" value="P:erythrocyte homeostasis"/>
    <property type="evidence" value="ECO:0000315"/>
    <property type="project" value="MGI"/>
</dbReference>
<dbReference type="GO" id="GO:0060324">
    <property type="term" value="P:face development"/>
    <property type="evidence" value="ECO:0000315"/>
    <property type="project" value="MGI"/>
</dbReference>
<dbReference type="GO" id="GO:0045444">
    <property type="term" value="P:fat cell differentiation"/>
    <property type="evidence" value="ECO:0000270"/>
    <property type="project" value="BHF-UCL"/>
</dbReference>
<dbReference type="GO" id="GO:0060613">
    <property type="term" value="P:fat pad development"/>
    <property type="evidence" value="ECO:0000315"/>
    <property type="project" value="MGI"/>
</dbReference>
<dbReference type="GO" id="GO:0010467">
    <property type="term" value="P:gene expression"/>
    <property type="evidence" value="ECO:0000315"/>
    <property type="project" value="MGI"/>
</dbReference>
<dbReference type="GO" id="GO:0021766">
    <property type="term" value="P:hippocampus development"/>
    <property type="evidence" value="ECO:0000315"/>
    <property type="project" value="MGI"/>
</dbReference>
<dbReference type="GO" id="GO:0048872">
    <property type="term" value="P:homeostasis of number of cells"/>
    <property type="evidence" value="ECO:0000315"/>
    <property type="project" value="MGI"/>
</dbReference>
<dbReference type="GO" id="GO:0033210">
    <property type="term" value="P:leptin-mediated signaling pathway"/>
    <property type="evidence" value="ECO:0000315"/>
    <property type="project" value="MGI"/>
</dbReference>
<dbReference type="GO" id="GO:0001776">
    <property type="term" value="P:leukocyte homeostasis"/>
    <property type="evidence" value="ECO:0000315"/>
    <property type="project" value="MGI"/>
</dbReference>
<dbReference type="GO" id="GO:0002260">
    <property type="term" value="P:lymphocyte homeostasis"/>
    <property type="evidence" value="ECO:0000315"/>
    <property type="project" value="MGI"/>
</dbReference>
<dbReference type="GO" id="GO:0051457">
    <property type="term" value="P:maintenance of protein location in nucleus"/>
    <property type="evidence" value="ECO:0007669"/>
    <property type="project" value="Ensembl"/>
</dbReference>
<dbReference type="GO" id="GO:0034454">
    <property type="term" value="P:microtubule anchoring at centrosome"/>
    <property type="evidence" value="ECO:0007669"/>
    <property type="project" value="Ensembl"/>
</dbReference>
<dbReference type="GO" id="GO:0000226">
    <property type="term" value="P:microtubule cytoskeleton organization"/>
    <property type="evidence" value="ECO:0000315"/>
    <property type="project" value="MGI"/>
</dbReference>
<dbReference type="GO" id="GO:0000281">
    <property type="term" value="P:mitotic cytokinesis"/>
    <property type="evidence" value="ECO:0007669"/>
    <property type="project" value="Ensembl"/>
</dbReference>
<dbReference type="GO" id="GO:0002262">
    <property type="term" value="P:myeloid cell homeostasis"/>
    <property type="evidence" value="ECO:0000315"/>
    <property type="project" value="MGI"/>
</dbReference>
<dbReference type="GO" id="GO:0030837">
    <property type="term" value="P:negative regulation of actin filament polymerization"/>
    <property type="evidence" value="ECO:0000315"/>
    <property type="project" value="MGI"/>
</dbReference>
<dbReference type="GO" id="GO:0038108">
    <property type="term" value="P:negative regulation of appetite by leptin-mediated signaling pathway"/>
    <property type="evidence" value="ECO:0000315"/>
    <property type="project" value="BHF-UCL"/>
</dbReference>
<dbReference type="GO" id="GO:0010629">
    <property type="term" value="P:negative regulation of gene expression"/>
    <property type="evidence" value="ECO:0000315"/>
    <property type="project" value="MGI"/>
</dbReference>
<dbReference type="GO" id="GO:0003085">
    <property type="term" value="P:negative regulation of systemic arterial blood pressure"/>
    <property type="evidence" value="ECO:0000315"/>
    <property type="project" value="MGI"/>
</dbReference>
<dbReference type="GO" id="GO:0001843">
    <property type="term" value="P:neural tube closure"/>
    <property type="evidence" value="ECO:0000315"/>
    <property type="project" value="MGI"/>
</dbReference>
<dbReference type="GO" id="GO:0001764">
    <property type="term" value="P:neuron migration"/>
    <property type="evidence" value="ECO:0000315"/>
    <property type="project" value="MGI"/>
</dbReference>
<dbReference type="GO" id="GO:1905515">
    <property type="term" value="P:non-motile cilium assembly"/>
    <property type="evidence" value="ECO:0000315"/>
    <property type="project" value="MGI"/>
</dbReference>
<dbReference type="GO" id="GO:0045494">
    <property type="term" value="P:photoreceptor cell maintenance"/>
    <property type="evidence" value="ECO:0000315"/>
    <property type="project" value="MGI"/>
</dbReference>
<dbReference type="GO" id="GO:0035845">
    <property type="term" value="P:photoreceptor cell outer segment organization"/>
    <property type="evidence" value="ECO:0000315"/>
    <property type="project" value="MGI"/>
</dbReference>
<dbReference type="GO" id="GO:0045724">
    <property type="term" value="P:positive regulation of cilium assembly"/>
    <property type="evidence" value="ECO:0000315"/>
    <property type="project" value="MGI"/>
</dbReference>
<dbReference type="GO" id="GO:0040018">
    <property type="term" value="P:positive regulation of multicellular organism growth"/>
    <property type="evidence" value="ECO:0000315"/>
    <property type="project" value="MGI"/>
</dbReference>
<dbReference type="GO" id="GO:0008104">
    <property type="term" value="P:protein localization"/>
    <property type="evidence" value="ECO:0000315"/>
    <property type="project" value="MGI"/>
</dbReference>
<dbReference type="GO" id="GO:0071539">
    <property type="term" value="P:protein localization to centrosome"/>
    <property type="evidence" value="ECO:0007669"/>
    <property type="project" value="Ensembl"/>
</dbReference>
<dbReference type="GO" id="GO:0033365">
    <property type="term" value="P:protein localization to organelle"/>
    <property type="evidence" value="ECO:0000314"/>
    <property type="project" value="BHF-UCL"/>
</dbReference>
<dbReference type="GO" id="GO:1903546">
    <property type="term" value="P:protein localization to photoreceptor outer segment"/>
    <property type="evidence" value="ECO:0000315"/>
    <property type="project" value="MGI"/>
</dbReference>
<dbReference type="GO" id="GO:0015031">
    <property type="term" value="P:protein transport"/>
    <property type="evidence" value="ECO:0007669"/>
    <property type="project" value="UniProtKB-KW"/>
</dbReference>
<dbReference type="GO" id="GO:0060296">
    <property type="term" value="P:regulation of cilium beat frequency involved in ciliary motility"/>
    <property type="evidence" value="ECO:0000315"/>
    <property type="project" value="BHF-UCL"/>
</dbReference>
<dbReference type="GO" id="GO:0032465">
    <property type="term" value="P:regulation of cytokinesis"/>
    <property type="evidence" value="ECO:0007669"/>
    <property type="project" value="Ensembl"/>
</dbReference>
<dbReference type="GO" id="GO:0019216">
    <property type="term" value="P:regulation of lipid metabolic process"/>
    <property type="evidence" value="ECO:0000315"/>
    <property type="project" value="MGI"/>
</dbReference>
<dbReference type="GO" id="GO:1902855">
    <property type="term" value="P:regulation of non-motile cilium assembly"/>
    <property type="evidence" value="ECO:0000315"/>
    <property type="project" value="MGI"/>
</dbReference>
<dbReference type="GO" id="GO:0051492">
    <property type="term" value="P:regulation of stress fiber assembly"/>
    <property type="evidence" value="ECO:0000315"/>
    <property type="project" value="MGI"/>
</dbReference>
<dbReference type="GO" id="GO:0044321">
    <property type="term" value="P:response to leptin"/>
    <property type="evidence" value="ECO:0000315"/>
    <property type="project" value="MGI"/>
</dbReference>
<dbReference type="GO" id="GO:0001895">
    <property type="term" value="P:retina homeostasis"/>
    <property type="evidence" value="ECO:0000315"/>
    <property type="project" value="MGI"/>
</dbReference>
<dbReference type="GO" id="GO:0046548">
    <property type="term" value="P:retinal rod cell development"/>
    <property type="evidence" value="ECO:0000315"/>
    <property type="project" value="MGI"/>
</dbReference>
<dbReference type="GO" id="GO:0007608">
    <property type="term" value="P:sensory perception of smell"/>
    <property type="evidence" value="ECO:0000315"/>
    <property type="project" value="MGI"/>
</dbReference>
<dbReference type="GO" id="GO:0035176">
    <property type="term" value="P:social behavior"/>
    <property type="evidence" value="ECO:0000315"/>
    <property type="project" value="MGI"/>
</dbReference>
<dbReference type="GO" id="GO:0120316">
    <property type="term" value="P:sperm flagellum assembly"/>
    <property type="evidence" value="ECO:0000315"/>
    <property type="project" value="MGI"/>
</dbReference>
<dbReference type="GO" id="GO:0007286">
    <property type="term" value="P:spermatid development"/>
    <property type="evidence" value="ECO:0000315"/>
    <property type="project" value="MGI"/>
</dbReference>
<dbReference type="GO" id="GO:0021756">
    <property type="term" value="P:striatum development"/>
    <property type="evidence" value="ECO:0000315"/>
    <property type="project" value="MGI"/>
</dbReference>
<dbReference type="GO" id="GO:0021591">
    <property type="term" value="P:ventricular system development"/>
    <property type="evidence" value="ECO:0000315"/>
    <property type="project" value="MGI"/>
</dbReference>
<dbReference type="GO" id="GO:0016055">
    <property type="term" value="P:Wnt signaling pathway"/>
    <property type="evidence" value="ECO:0000315"/>
    <property type="project" value="MGI"/>
</dbReference>
<dbReference type="FunFam" id="1.25.40.10:FF:000234">
    <property type="entry name" value="Bardet-Biedl syndrome 4 (Human)"/>
    <property type="match status" value="1"/>
</dbReference>
<dbReference type="FunFam" id="1.25.40.10:FF:000237">
    <property type="entry name" value="Bardet-Biedl syndrome 4 (Human)"/>
    <property type="match status" value="1"/>
</dbReference>
<dbReference type="FunFam" id="1.25.40.10:FF:000265">
    <property type="entry name" value="Bardet-Biedl syndrome 4 (Human)"/>
    <property type="match status" value="1"/>
</dbReference>
<dbReference type="Gene3D" id="1.25.40.10">
    <property type="entry name" value="Tetratricopeptide repeat domain"/>
    <property type="match status" value="3"/>
</dbReference>
<dbReference type="InterPro" id="IPR011990">
    <property type="entry name" value="TPR-like_helical_dom_sf"/>
</dbReference>
<dbReference type="InterPro" id="IPR019734">
    <property type="entry name" value="TPR_rpt"/>
</dbReference>
<dbReference type="PANTHER" id="PTHR44186">
    <property type="match status" value="1"/>
</dbReference>
<dbReference type="PANTHER" id="PTHR44186:SF1">
    <property type="entry name" value="BARDET-BIEDL SYNDROME 4 PROTEIN"/>
    <property type="match status" value="1"/>
</dbReference>
<dbReference type="Pfam" id="PF13414">
    <property type="entry name" value="TPR_11"/>
    <property type="match status" value="1"/>
</dbReference>
<dbReference type="Pfam" id="PF13432">
    <property type="entry name" value="TPR_16"/>
    <property type="match status" value="1"/>
</dbReference>
<dbReference type="Pfam" id="PF13181">
    <property type="entry name" value="TPR_8"/>
    <property type="match status" value="3"/>
</dbReference>
<dbReference type="SMART" id="SM00028">
    <property type="entry name" value="TPR"/>
    <property type="match status" value="8"/>
</dbReference>
<dbReference type="SUPFAM" id="SSF81901">
    <property type="entry name" value="HCP-like"/>
    <property type="match status" value="1"/>
</dbReference>
<dbReference type="SUPFAM" id="SSF48452">
    <property type="entry name" value="TPR-like"/>
    <property type="match status" value="2"/>
</dbReference>
<dbReference type="PROSITE" id="PS50005">
    <property type="entry name" value="TPR"/>
    <property type="match status" value="8"/>
</dbReference>
<dbReference type="PROSITE" id="PS50293">
    <property type="entry name" value="TPR_REGION"/>
    <property type="match status" value="1"/>
</dbReference>
<name>BBS4_MOUSE</name>
<accession>Q8C1Z7</accession>
<accession>Q3UYF0</accession>
<accession>Q562E1</accession>
<accession>Q5EBJ7</accession>
<accession>Q8CA57</accession>
<sequence length="520" mass="58255">MAEVKLGMKTQVPASVESQKPRSKKAPDFPIVEKQNWLIHLHYIRKDYEACKAVIKEQLQETQGLCEYAIYVQALIFRLEGNIQESLELFQTCAVLSPQCADNLKQVARSLFLLGKHKAATEVYNEAAKLNQKDWEICHNLGVCYTYLKQFNKAQDQLHSALQLNKHDLTYIMLGKIHLLQGDLDKAIEIYKKAVEFSPENTELLTTLGLLYLQLGVYQKAFEHLGNALTYDPANYKAILAAGSMMQTHGDFDVALTKYRVVACAIPESPPLWNNIGMCFFGKKKYVAAISCLKRANYLAPFDWKILYNLGLVHLTMQQYASAFHFLSAAINFQPKMGELYMLLAVALTNLEDIENARRAYVEAVRLDKCNPLVNLNYAVLLYNQGEKKSALAQYQEMEKKVNFLKDNSPLEFDSEMVEMAQKLGAALQVGEALVWTKPVKDPKTKHRTNSGSKSATLQQPLGSIQALGQAMSSAAAYRKILSGAVGAQLPKPPSLPLEPEPEPTVEASPTEASEQKKEK</sequence>
<comment type="function">
    <text evidence="1">The BBSome complex is thought to function as a coat complex required for sorting of specific membrane proteins to the primary cilia. The BBSome complex is required for ciliogenesis but is dispensable for centriolar satellite function. This ciliogenic function is mediated in part by the Rab8 GDP/GTP exchange factor, which localizes to the basal body and contacts the BBSome. Rab8(GTP) enters the primary cilium and promotes extension of the ciliary membrane. Firstly the BBSome associates with the ciliary membrane and binds to RAB3IP/Rabin8, the guanosyl exchange factor (GEF) for Rab8 and then the Rab8-GTP localizes to the cilium and promotes docking and fusion of carrier vesicles to the base of the ciliary membrane. The BBSome complex, together with the LTZL1, controls SMO ciliary trafficking and contributes to the sonic hedgehog (SHH) pathway regulation. Required for proper BBSome complex assembly and its ciliary localization. Required for microtubule anchoring at the centrosome but not for microtubule nucleation. May be required for the dynein-mediated transport of pericentriolar proteins to the centrosome (By similarity).</text>
</comment>
<comment type="subunit">
    <text evidence="2 6 8">Part of BBSome complex, that contains BBS1, BBS2, BBS4, BBS5, BBS7, BBS8/TTC8, BBS9 and BBIP10. Interacts with PCM1 and DCTN1. Interacts with DC28B. Interacts with ALDOB and C2CD3. Interacts with PKD1 (By similarity). Interacts with CEP290 (By similarity). Interacts with DLEC1 (By similarity).</text>
</comment>
<comment type="interaction">
    <interactant intactId="EBI-2892887">
        <id>Q8C1Z7</id>
    </interactant>
    <interactant intactId="EBI-2892836">
        <id>Q3V3N7</id>
        <label>Bbs1</label>
    </interactant>
    <organismsDiffer>false</organismsDiffer>
    <experiments>5</experiments>
</comment>
<comment type="subcellular location">
    <subcellularLocation>
        <location evidence="1">Cytoplasm</location>
        <location evidence="1">Cytoskeleton</location>
        <location evidence="1">Microtubule organizing center</location>
        <location evidence="1">Centrosome</location>
    </subcellularLocation>
    <subcellularLocation>
        <location evidence="1">Cell projection</location>
        <location evidence="1">Cilium membrane</location>
    </subcellularLocation>
    <subcellularLocation>
        <location evidence="1">Cytoplasm</location>
    </subcellularLocation>
    <subcellularLocation>
        <location evidence="1">Cytoplasm</location>
        <location evidence="1">Cytoskeleton</location>
        <location evidence="1">Microtubule organizing center</location>
        <location evidence="1">Centrosome</location>
        <location evidence="1">Centriolar satellite</location>
    </subcellularLocation>
    <subcellularLocation>
        <location evidence="4 6">Cell projection</location>
        <location evidence="4 6">Cilium</location>
        <location evidence="4 6">Flagellum</location>
    </subcellularLocation>
    <subcellularLocation>
        <location evidence="7">Cell projection</location>
        <location evidence="7">Cilium</location>
    </subcellularLocation>
    <text>Localizes to the pericentriolar material. Centrosomal localization requires dynein (By similarity). Localizes to the connecting cilium of photoreceptor cells (PubMed:23943788).</text>
</comment>
<comment type="tissue specificity">
    <text evidence="4 6">Expressed in the hippocampus and dentate gyrus, the columnar epithelial cells of bronchioles, the olfactory epithelium and the inner segment and outer nuclear layer of the retina. Expressed in testis.</text>
</comment>
<comment type="developmental stage">
    <text evidence="4">Expressed in the pericardium of the developing embryo and in the epidermal layer surrounding the digits.</text>
</comment>
<comment type="disruption phenotype">
    <text evidence="5 6">Males are sterile due to a loss of sperm flagella. In mice obesity is associated with hyperleptinemia and resistance to the anorectic and weight-reducing effects of leptin. Although mice are resistant to the metabolic actions of leptin, animals remain responsive to the effects of leptin on renal sympathetic nerve activity and arterial pressure and developed hypertension. BBS mice have decreased hypothalamic expression of proopiomelanocortin (POMC). BBS genes play an important role in maintaining leptin sensitivity in POMC neurons.</text>
</comment>
<comment type="similarity">
    <text evidence="9">Belongs to the BBS4 family.</text>
</comment>
<feature type="chain" id="PRO_0000106264" description="BBSome complex member BBS4">
    <location>
        <begin position="1"/>
        <end position="520"/>
    </location>
</feature>
<feature type="repeat" description="TPR 1">
    <location>
        <begin position="67"/>
        <end position="100"/>
    </location>
</feature>
<feature type="repeat" description="TPR 2">
    <location>
        <begin position="102"/>
        <end position="134"/>
    </location>
</feature>
<feature type="repeat" description="TPR 3">
    <location>
        <begin position="135"/>
        <end position="167"/>
    </location>
</feature>
<feature type="repeat" description="TPR 4">
    <location>
        <begin position="168"/>
        <end position="201"/>
    </location>
</feature>
<feature type="repeat" description="TPR 5">
    <location>
        <begin position="203"/>
        <end position="235"/>
    </location>
</feature>
<feature type="repeat" description="TPR 6">
    <location>
        <begin position="237"/>
        <end position="269"/>
    </location>
</feature>
<feature type="repeat" description="TPR 7">
    <location>
        <begin position="270"/>
        <end position="303"/>
    </location>
</feature>
<feature type="repeat" description="TPR 8">
    <location>
        <begin position="304"/>
        <end position="337"/>
    </location>
</feature>
<feature type="repeat" description="TPR 9">
    <location>
        <begin position="339"/>
        <end position="371"/>
    </location>
</feature>
<feature type="repeat" description="TPR 10">
    <location>
        <begin position="373"/>
        <end position="408"/>
    </location>
</feature>
<feature type="region of interest" description="Required for localization to centrosomes" evidence="1">
    <location>
        <begin position="1"/>
        <end position="66"/>
    </location>
</feature>
<feature type="region of interest" description="Disordered" evidence="3">
    <location>
        <begin position="1"/>
        <end position="26"/>
    </location>
</feature>
<feature type="region of interest" description="Interaction with PCM1" evidence="1">
    <location>
        <begin position="101"/>
        <end position="337"/>
    </location>
</feature>
<feature type="region of interest" description="Required for localization to centrosomes" evidence="1">
    <location>
        <begin position="338"/>
        <end position="520"/>
    </location>
</feature>
<feature type="region of interest" description="Disordered" evidence="3">
    <location>
        <begin position="488"/>
        <end position="520"/>
    </location>
</feature>
<feature type="sequence conflict" description="In Ref. 3; AAH92531." evidence="9" ref="3">
    <original>E</original>
    <variation>V</variation>
    <location>
        <position position="515"/>
    </location>
</feature>
<organism>
    <name type="scientific">Mus musculus</name>
    <name type="common">Mouse</name>
    <dbReference type="NCBI Taxonomy" id="10090"/>
    <lineage>
        <taxon>Eukaryota</taxon>
        <taxon>Metazoa</taxon>
        <taxon>Chordata</taxon>
        <taxon>Craniata</taxon>
        <taxon>Vertebrata</taxon>
        <taxon>Euteleostomi</taxon>
        <taxon>Mammalia</taxon>
        <taxon>Eutheria</taxon>
        <taxon>Euarchontoglires</taxon>
        <taxon>Glires</taxon>
        <taxon>Rodentia</taxon>
        <taxon>Myomorpha</taxon>
        <taxon>Muroidea</taxon>
        <taxon>Muridae</taxon>
        <taxon>Murinae</taxon>
        <taxon>Mus</taxon>
        <taxon>Mus</taxon>
    </lineage>
</organism>
<proteinExistence type="evidence at protein level"/>
<keyword id="KW-1003">Cell membrane</keyword>
<keyword id="KW-0966">Cell projection</keyword>
<keyword id="KW-0969">Cilium</keyword>
<keyword id="KW-0970">Cilium biogenesis/degradation</keyword>
<keyword id="KW-0963">Cytoplasm</keyword>
<keyword id="KW-0206">Cytoskeleton</keyword>
<keyword id="KW-0282">Flagellum</keyword>
<keyword id="KW-0472">Membrane</keyword>
<keyword id="KW-0653">Protein transport</keyword>
<keyword id="KW-1185">Reference proteome</keyword>
<keyword id="KW-0677">Repeat</keyword>
<keyword id="KW-0802">TPR repeat</keyword>
<keyword id="KW-0813">Transport</keyword>
<evidence type="ECO:0000250" key="1"/>
<evidence type="ECO:0000250" key="2">
    <source>
        <dbReference type="UniProtKB" id="Q96RK4"/>
    </source>
</evidence>
<evidence type="ECO:0000256" key="3">
    <source>
        <dbReference type="SAM" id="MobiDB-lite"/>
    </source>
</evidence>
<evidence type="ECO:0000269" key="4">
    <source>
    </source>
</evidence>
<evidence type="ECO:0000269" key="5">
    <source>
    </source>
</evidence>
<evidence type="ECO:0000269" key="6">
    <source>
    </source>
</evidence>
<evidence type="ECO:0000269" key="7">
    <source>
    </source>
</evidence>
<evidence type="ECO:0000269" key="8">
    <source>
    </source>
</evidence>
<evidence type="ECO:0000305" key="9"/>
<protein>
    <recommendedName>
        <fullName evidence="9">BBSome complex member BBS4</fullName>
    </recommendedName>
    <alternativeName>
        <fullName>Bardet-Biedl syndrome 4 protein homolog</fullName>
    </alternativeName>
</protein>
<gene>
    <name type="primary">Bbs4</name>
</gene>
<reference key="1">
    <citation type="journal article" date="2002" name="Am. J. Hum. Genet.">
        <title>BBS4 is a minor contributor to Bardet-Biedl syndrome and may also participate in triallelic inheritance.</title>
        <authorList>
            <person name="Katsanis N."/>
            <person name="Eichers E.R."/>
            <person name="Ansley S.J."/>
            <person name="Lewis R.A."/>
            <person name="Kayserili H."/>
            <person name="Hoskins B.E."/>
            <person name="Scambler P.J."/>
            <person name="Beales P.L."/>
            <person name="Lupski J.R."/>
        </authorList>
    </citation>
    <scope>NUCLEOTIDE SEQUENCE [MRNA]</scope>
</reference>
<reference key="2">
    <citation type="journal article" date="2005" name="Science">
        <title>The transcriptional landscape of the mammalian genome.</title>
        <authorList>
            <person name="Carninci P."/>
            <person name="Kasukawa T."/>
            <person name="Katayama S."/>
            <person name="Gough J."/>
            <person name="Frith M.C."/>
            <person name="Maeda N."/>
            <person name="Oyama R."/>
            <person name="Ravasi T."/>
            <person name="Lenhard B."/>
            <person name="Wells C."/>
            <person name="Kodzius R."/>
            <person name="Shimokawa K."/>
            <person name="Bajic V.B."/>
            <person name="Brenner S.E."/>
            <person name="Batalov S."/>
            <person name="Forrest A.R."/>
            <person name="Zavolan M."/>
            <person name="Davis M.J."/>
            <person name="Wilming L.G."/>
            <person name="Aidinis V."/>
            <person name="Allen J.E."/>
            <person name="Ambesi-Impiombato A."/>
            <person name="Apweiler R."/>
            <person name="Aturaliya R.N."/>
            <person name="Bailey T.L."/>
            <person name="Bansal M."/>
            <person name="Baxter L."/>
            <person name="Beisel K.W."/>
            <person name="Bersano T."/>
            <person name="Bono H."/>
            <person name="Chalk A.M."/>
            <person name="Chiu K.P."/>
            <person name="Choudhary V."/>
            <person name="Christoffels A."/>
            <person name="Clutterbuck D.R."/>
            <person name="Crowe M.L."/>
            <person name="Dalla E."/>
            <person name="Dalrymple B.P."/>
            <person name="de Bono B."/>
            <person name="Della Gatta G."/>
            <person name="di Bernardo D."/>
            <person name="Down T."/>
            <person name="Engstrom P."/>
            <person name="Fagiolini M."/>
            <person name="Faulkner G."/>
            <person name="Fletcher C.F."/>
            <person name="Fukushima T."/>
            <person name="Furuno M."/>
            <person name="Futaki S."/>
            <person name="Gariboldi M."/>
            <person name="Georgii-Hemming P."/>
            <person name="Gingeras T.R."/>
            <person name="Gojobori T."/>
            <person name="Green R.E."/>
            <person name="Gustincich S."/>
            <person name="Harbers M."/>
            <person name="Hayashi Y."/>
            <person name="Hensch T.K."/>
            <person name="Hirokawa N."/>
            <person name="Hill D."/>
            <person name="Huminiecki L."/>
            <person name="Iacono M."/>
            <person name="Ikeo K."/>
            <person name="Iwama A."/>
            <person name="Ishikawa T."/>
            <person name="Jakt M."/>
            <person name="Kanapin A."/>
            <person name="Katoh M."/>
            <person name="Kawasawa Y."/>
            <person name="Kelso J."/>
            <person name="Kitamura H."/>
            <person name="Kitano H."/>
            <person name="Kollias G."/>
            <person name="Krishnan S.P."/>
            <person name="Kruger A."/>
            <person name="Kummerfeld S.K."/>
            <person name="Kurochkin I.V."/>
            <person name="Lareau L.F."/>
            <person name="Lazarevic D."/>
            <person name="Lipovich L."/>
            <person name="Liu J."/>
            <person name="Liuni S."/>
            <person name="McWilliam S."/>
            <person name="Madan Babu M."/>
            <person name="Madera M."/>
            <person name="Marchionni L."/>
            <person name="Matsuda H."/>
            <person name="Matsuzawa S."/>
            <person name="Miki H."/>
            <person name="Mignone F."/>
            <person name="Miyake S."/>
            <person name="Morris K."/>
            <person name="Mottagui-Tabar S."/>
            <person name="Mulder N."/>
            <person name="Nakano N."/>
            <person name="Nakauchi H."/>
            <person name="Ng P."/>
            <person name="Nilsson R."/>
            <person name="Nishiguchi S."/>
            <person name="Nishikawa S."/>
            <person name="Nori F."/>
            <person name="Ohara O."/>
            <person name="Okazaki Y."/>
            <person name="Orlando V."/>
            <person name="Pang K.C."/>
            <person name="Pavan W.J."/>
            <person name="Pavesi G."/>
            <person name="Pesole G."/>
            <person name="Petrovsky N."/>
            <person name="Piazza S."/>
            <person name="Reed J."/>
            <person name="Reid J.F."/>
            <person name="Ring B.Z."/>
            <person name="Ringwald M."/>
            <person name="Rost B."/>
            <person name="Ruan Y."/>
            <person name="Salzberg S.L."/>
            <person name="Sandelin A."/>
            <person name="Schneider C."/>
            <person name="Schoenbach C."/>
            <person name="Sekiguchi K."/>
            <person name="Semple C.A."/>
            <person name="Seno S."/>
            <person name="Sessa L."/>
            <person name="Sheng Y."/>
            <person name="Shibata Y."/>
            <person name="Shimada H."/>
            <person name="Shimada K."/>
            <person name="Silva D."/>
            <person name="Sinclair B."/>
            <person name="Sperling S."/>
            <person name="Stupka E."/>
            <person name="Sugiura K."/>
            <person name="Sultana R."/>
            <person name="Takenaka Y."/>
            <person name="Taki K."/>
            <person name="Tammoja K."/>
            <person name="Tan S.L."/>
            <person name="Tang S."/>
            <person name="Taylor M.S."/>
            <person name="Tegner J."/>
            <person name="Teichmann S.A."/>
            <person name="Ueda H.R."/>
            <person name="van Nimwegen E."/>
            <person name="Verardo R."/>
            <person name="Wei C.L."/>
            <person name="Yagi K."/>
            <person name="Yamanishi H."/>
            <person name="Zabarovsky E."/>
            <person name="Zhu S."/>
            <person name="Zimmer A."/>
            <person name="Hide W."/>
            <person name="Bult C."/>
            <person name="Grimmond S.M."/>
            <person name="Teasdale R.D."/>
            <person name="Liu E.T."/>
            <person name="Brusic V."/>
            <person name="Quackenbush J."/>
            <person name="Wahlestedt C."/>
            <person name="Mattick J.S."/>
            <person name="Hume D.A."/>
            <person name="Kai C."/>
            <person name="Sasaki D."/>
            <person name="Tomaru Y."/>
            <person name="Fukuda S."/>
            <person name="Kanamori-Katayama M."/>
            <person name="Suzuki M."/>
            <person name="Aoki J."/>
            <person name="Arakawa T."/>
            <person name="Iida J."/>
            <person name="Imamura K."/>
            <person name="Itoh M."/>
            <person name="Kato T."/>
            <person name="Kawaji H."/>
            <person name="Kawagashira N."/>
            <person name="Kawashima T."/>
            <person name="Kojima M."/>
            <person name="Kondo S."/>
            <person name="Konno H."/>
            <person name="Nakano K."/>
            <person name="Ninomiya N."/>
            <person name="Nishio T."/>
            <person name="Okada M."/>
            <person name="Plessy C."/>
            <person name="Shibata K."/>
            <person name="Shiraki T."/>
            <person name="Suzuki S."/>
            <person name="Tagami M."/>
            <person name="Waki K."/>
            <person name="Watahiki A."/>
            <person name="Okamura-Oho Y."/>
            <person name="Suzuki H."/>
            <person name="Kawai J."/>
            <person name="Hayashizaki Y."/>
        </authorList>
    </citation>
    <scope>NUCLEOTIDE SEQUENCE [LARGE SCALE MRNA]</scope>
    <source>
        <strain>C57BL/6J</strain>
        <tissue>Medulla oblongata</tissue>
    </source>
</reference>
<reference key="3">
    <citation type="journal article" date="2004" name="Genome Res.">
        <title>The status, quality, and expansion of the NIH full-length cDNA project: the Mammalian Gene Collection (MGC).</title>
        <authorList>
            <consortium name="The MGC Project Team"/>
        </authorList>
    </citation>
    <scope>NUCLEOTIDE SEQUENCE [LARGE SCALE MRNA]</scope>
    <source>
        <strain>C57BL/6J</strain>
        <tissue>Brain</tissue>
        <tissue>Pituitary</tissue>
    </source>
</reference>
<reference key="4">
    <citation type="journal article" date="2004" name="Nat. Genet.">
        <title>The Bardet-Biedl protein BBS4 targets cargo to the pericentriolar region and is required for microtubule anchoring and cell cycle progression.</title>
        <authorList>
            <person name="Kim J.C."/>
            <person name="Badano J.L."/>
            <person name="Sibold S."/>
            <person name="Esmail M.A."/>
            <person name="Hill J."/>
            <person name="Hoskins B.E."/>
            <person name="Leitch C.C."/>
            <person name="Venner K."/>
            <person name="Ansley S.J."/>
            <person name="Ross A.J."/>
            <person name="Leroux M.R."/>
            <person name="Katsanis N."/>
            <person name="Beales P.L."/>
        </authorList>
    </citation>
    <scope>SUBCELLULAR LOCATION</scope>
    <scope>TISSUE SPECIFICITY</scope>
    <scope>DEVELOPMENTAL STAGE</scope>
</reference>
<reference key="5">
    <citation type="journal article" date="2008" name="J. Clin. Invest.">
        <title>Leptin resistance contributes to obesity and hypertension in mouse models of Bardet-Biedl syndrome.</title>
        <authorList>
            <person name="Rahmouni K."/>
            <person name="Fath M.A."/>
            <person name="Seo S."/>
            <person name="Thedens D.R."/>
            <person name="Berry C.J."/>
            <person name="Weiss R."/>
            <person name="Nishimura D.Y."/>
            <person name="Sheffield V.C."/>
        </authorList>
    </citation>
    <scope>DISRUPTION PHENOTYPE</scope>
</reference>
<reference key="6">
    <citation type="journal article" date="2011" name="PLoS Genet.">
        <title>A novel protein LZTFL1 regulates ciliary trafficking of the BBSome and Smoothened.</title>
        <authorList>
            <person name="Seo S."/>
            <person name="Zhang Q."/>
            <person name="Bugge K."/>
            <person name="Breslow D.K."/>
            <person name="Searby C.C."/>
            <person name="Nachury M.V."/>
            <person name="Sheffield V.C."/>
        </authorList>
    </citation>
    <scope>IDENTIFICATION IN THE BBSOME COMPLEX</scope>
    <scope>DISRUPTION PHENOTYPE</scope>
    <scope>TISSUE SPECIFICITY</scope>
    <scope>SUBCELLULAR LOCATION</scope>
    <scope>IDENTIFICATION BY MASS SPECTROMETRY</scope>
</reference>
<reference key="7">
    <citation type="journal article" date="2014" name="Hum. Mol. Genet.">
        <title>BBS mutations modify phenotypic expression of CEP290-related ciliopathies.</title>
        <authorList>
            <person name="Zhang Y."/>
            <person name="Seo S."/>
            <person name="Bhattarai S."/>
            <person name="Bugge K."/>
            <person name="Searby C.C."/>
            <person name="Zhang Q."/>
            <person name="Drack A.V."/>
            <person name="Stone E.M."/>
            <person name="Sheffield V.C."/>
        </authorList>
    </citation>
    <scope>SUBCELLULAR LOCATION</scope>
</reference>
<reference key="8">
    <citation type="journal article" date="2014" name="Proc. Natl. Acad. Sci. U.S.A.">
        <title>C2cd3 is critical for centriolar distal appendage assembly and ciliary vesicle docking in mammals.</title>
        <authorList>
            <person name="Ye X."/>
            <person name="Zeng H."/>
            <person name="Ning G."/>
            <person name="Reiter J.F."/>
            <person name="Liu A."/>
        </authorList>
    </citation>
    <scope>INTERACTION WITH C2CD3</scope>
</reference>